<reference key="1">
    <citation type="journal article" date="1997" name="Nature">
        <title>The complete genome sequence of the gastric pathogen Helicobacter pylori.</title>
        <authorList>
            <person name="Tomb J.-F."/>
            <person name="White O."/>
            <person name="Kerlavage A.R."/>
            <person name="Clayton R.A."/>
            <person name="Sutton G.G."/>
            <person name="Fleischmann R.D."/>
            <person name="Ketchum K.A."/>
            <person name="Klenk H.-P."/>
            <person name="Gill S.R."/>
            <person name="Dougherty B.A."/>
            <person name="Nelson K.E."/>
            <person name="Quackenbush J."/>
            <person name="Zhou L."/>
            <person name="Kirkness E.F."/>
            <person name="Peterson S.N."/>
            <person name="Loftus B.J."/>
            <person name="Richardson D.L."/>
            <person name="Dodson R.J."/>
            <person name="Khalak H.G."/>
            <person name="Glodek A."/>
            <person name="McKenney K."/>
            <person name="FitzGerald L.M."/>
            <person name="Lee N."/>
            <person name="Adams M.D."/>
            <person name="Hickey E.K."/>
            <person name="Berg D.E."/>
            <person name="Gocayne J.D."/>
            <person name="Utterback T.R."/>
            <person name="Peterson J.D."/>
            <person name="Kelley J.M."/>
            <person name="Cotton M.D."/>
            <person name="Weidman J.F."/>
            <person name="Fujii C."/>
            <person name="Bowman C."/>
            <person name="Watthey L."/>
            <person name="Wallin E."/>
            <person name="Hayes W.S."/>
            <person name="Borodovsky M."/>
            <person name="Karp P.D."/>
            <person name="Smith H.O."/>
            <person name="Fraser C.M."/>
            <person name="Venter J.C."/>
        </authorList>
    </citation>
    <scope>NUCLEOTIDE SEQUENCE [LARGE SCALE GENOMIC DNA]</scope>
    <source>
        <strain>ATCC 700392 / 26695</strain>
    </source>
</reference>
<reference key="2">
    <citation type="submission" date="1997-06" db="EMBL/GenBank/DDBJ databases">
        <authorList>
            <person name="Beier D."/>
            <person name="Scarlato V."/>
        </authorList>
    </citation>
    <scope>NUCLEOTIDE SEQUENCE [GENOMIC DNA]</scope>
    <source>
        <strain>DSM 4867 / CCUG 17874 / NCTC 11638</strain>
    </source>
</reference>
<reference key="3">
    <citation type="journal article" date="2011" name="Antimicrob. Agents Chemother.">
        <title>Diversity of the early step of the futalosine pathway.</title>
        <authorList>
            <person name="Arakawa C."/>
            <person name="Kuratsu M."/>
            <person name="Furihata K."/>
            <person name="Hiratsuka T."/>
            <person name="Itoh N."/>
            <person name="Seto H."/>
            <person name="Dairi T."/>
        </authorList>
    </citation>
    <scope>FUNCTION AS AFL NUCLEOSIDASE</scope>
    <scope>CATALYTIC ACTIVITY</scope>
    <scope>SUBSTRATE SPECIFICITY</scope>
    <scope>MENAQUINONE BIOSYNTHESIS PATHWAY</scope>
    <source>
        <strain>ATCC 700392 / 26695</strain>
    </source>
</reference>
<reference key="4">
    <citation type="journal article" date="2013" name="J. Am. Chem. Soc.">
        <title>Menaquinone biosynthesis: formation of aminofutalosine requires a unique radical SAM enzyme.</title>
        <authorList>
            <person name="Mahanta N."/>
            <person name="Fedoseyenko D."/>
            <person name="Dairi T."/>
            <person name="Begley T.P."/>
        </authorList>
    </citation>
    <scope>FUNCTION AS AFL NUCLEOSIDASE</scope>
    <scope>CATALYTIC ACTIVITY</scope>
    <scope>MENAQUINONE BIOSYNTHESIS PATHWAY</scope>
    <source>
        <strain>ATCC 700392 / 26695</strain>
    </source>
</reference>
<reference key="5">
    <citation type="submission" date="2013-09" db="PDB data bank">
        <title>Structural enzymology of H. pylori futalosine hydrolase.</title>
        <authorList>
            <person name="Kim R.Q."/>
            <person name="Offen W.A."/>
            <person name="Stubbs K.A."/>
            <person name="Davies G.J."/>
        </authorList>
    </citation>
    <scope>X-RAY CRYSTALLOGRAPHY (1.79 ANGSTROMS) OF WILD-TYPE AND MUTANTS GLN-14; ALA-199 AND ASN-199 IN COMPLEX WITH 5'-METHYLTHIOADENOSINE</scope>
</reference>
<evidence type="ECO:0000250" key="1"/>
<evidence type="ECO:0000269" key="2">
    <source>
    </source>
</evidence>
<evidence type="ECO:0000269" key="3">
    <source>
    </source>
</evidence>
<evidence type="ECO:0000305" key="4"/>
<evidence type="ECO:0007829" key="5">
    <source>
        <dbReference type="PDB" id="4BMY"/>
    </source>
</evidence>
<organism>
    <name type="scientific">Helicobacter pylori (strain ATCC 700392 / 26695)</name>
    <name type="common">Campylobacter pylori</name>
    <dbReference type="NCBI Taxonomy" id="85962"/>
    <lineage>
        <taxon>Bacteria</taxon>
        <taxon>Pseudomonadati</taxon>
        <taxon>Campylobacterota</taxon>
        <taxon>Epsilonproteobacteria</taxon>
        <taxon>Campylobacterales</taxon>
        <taxon>Helicobacteraceae</taxon>
        <taxon>Helicobacter</taxon>
    </lineage>
</organism>
<comment type="function">
    <text evidence="2 3">Catalyzes the direct conversion of aminodeoxyfutalosine (AFL) into dehypoxanthine futalosine (DHFL) and adenine via the hydrolysis of the N-glycosidic bond; this reaction seems to represent an essential step in the menaquinone biosynthesis pathway in Helicobacter species. Can also probably catalyzes the hydrolysis of 5'-methylthioadenosine (MTA) and S-adenosylhomocysteine (SAH) to adenine and the corresponding thioribose, 5'-methylthioribose and S-ribosylhomocysteine, respectively. These other activities highlight the tremendous versatility of the enzyme, which also plays key roles in S-adenosylmethionine recycling and in the biosynthesis of the quorum-sensing molecule autoinducer-2. Does not act on futalosine (FL) as substrate.</text>
</comment>
<comment type="catalytic activity">
    <reaction evidence="2 3">
        <text>6-amino-6-deoxyfutalosine + H2O = dehypoxanthine futalosine + adenine</text>
        <dbReference type="Rhea" id="RHEA:33079"/>
        <dbReference type="ChEBI" id="CHEBI:15377"/>
        <dbReference type="ChEBI" id="CHEBI:16708"/>
        <dbReference type="ChEBI" id="CHEBI:58864"/>
        <dbReference type="ChEBI" id="CHEBI:64286"/>
        <dbReference type="EC" id="3.2.2.30"/>
    </reaction>
</comment>
<comment type="catalytic activity">
    <reaction evidence="2 3">
        <text>S-adenosyl-L-homocysteine + H2O = S-(5-deoxy-D-ribos-5-yl)-L-homocysteine + adenine</text>
        <dbReference type="Rhea" id="RHEA:17805"/>
        <dbReference type="ChEBI" id="CHEBI:15377"/>
        <dbReference type="ChEBI" id="CHEBI:16708"/>
        <dbReference type="ChEBI" id="CHEBI:57856"/>
        <dbReference type="ChEBI" id="CHEBI:58195"/>
        <dbReference type="EC" id="3.2.2.9"/>
    </reaction>
</comment>
<comment type="catalytic activity">
    <reaction evidence="2 3">
        <text>S-methyl-5'-thioadenosine + H2O = 5-(methylsulfanyl)-D-ribose + adenine</text>
        <dbReference type="Rhea" id="RHEA:13617"/>
        <dbReference type="ChEBI" id="CHEBI:15377"/>
        <dbReference type="ChEBI" id="CHEBI:16708"/>
        <dbReference type="ChEBI" id="CHEBI:17509"/>
        <dbReference type="ChEBI" id="CHEBI:78440"/>
        <dbReference type="EC" id="3.2.2.9"/>
    </reaction>
</comment>
<comment type="catalytic activity">
    <reaction evidence="2 3">
        <text>5'-deoxyadenosine + H2O = 5-deoxy-D-ribose + adenine</text>
        <dbReference type="Rhea" id="RHEA:29859"/>
        <dbReference type="ChEBI" id="CHEBI:15377"/>
        <dbReference type="ChEBI" id="CHEBI:16708"/>
        <dbReference type="ChEBI" id="CHEBI:17319"/>
        <dbReference type="ChEBI" id="CHEBI:149540"/>
        <dbReference type="EC" id="3.2.2.9"/>
    </reaction>
</comment>
<comment type="pathway">
    <text>Quinol/quinone metabolism; menaquinone biosynthesis.</text>
</comment>
<comment type="pathway">
    <text>Amino-acid biosynthesis; L-methionine biosynthesis via salvage pathway; S-methyl-5-thio-alpha-D-ribose 1-phosphate from S-methyl-5'-thioadenosine (hydrolase route): step 1/2.</text>
</comment>
<comment type="subunit">
    <text evidence="1">Homodimer.</text>
</comment>
<comment type="similarity">
    <text evidence="4">Belongs to the PNP/UDP phosphorylase family.</text>
</comment>
<comment type="sequence caution" evidence="4">
    <conflict type="erroneous initiation">
        <sequence resource="EMBL-CDS" id="AAC64855"/>
    </conflict>
    <text>Extended N-terminus.</text>
</comment>
<gene>
    <name type="primary">mtnN</name>
    <name type="synonym">mtn</name>
    <name type="ordered locus">HP_0089</name>
</gene>
<keyword id="KW-0002">3D-structure</keyword>
<keyword id="KW-0028">Amino-acid biosynthesis</keyword>
<keyword id="KW-0378">Hydrolase</keyword>
<keyword id="KW-0474">Menaquinone biosynthesis</keyword>
<keyword id="KW-0486">Methionine biosynthesis</keyword>
<keyword id="KW-1185">Reference proteome</keyword>
<dbReference type="EC" id="3.2.2.30" evidence="2 3"/>
<dbReference type="EC" id="3.2.2.9" evidence="2 3"/>
<dbReference type="EMBL" id="AE000511">
    <property type="protein sequence ID" value="AAD07157.1"/>
    <property type="molecule type" value="Genomic_DNA"/>
</dbReference>
<dbReference type="EMBL" id="AF009177">
    <property type="protein sequence ID" value="AAC64855.1"/>
    <property type="status" value="ALT_INIT"/>
    <property type="molecule type" value="Genomic_DNA"/>
</dbReference>
<dbReference type="PIR" id="A64531">
    <property type="entry name" value="A64531"/>
</dbReference>
<dbReference type="RefSeq" id="NP_206889.1">
    <property type="nucleotide sequence ID" value="NC_000915.1"/>
</dbReference>
<dbReference type="RefSeq" id="WP_000250146.1">
    <property type="nucleotide sequence ID" value="NC_018939.1"/>
</dbReference>
<dbReference type="PDB" id="4BMX">
    <property type="method" value="X-ray"/>
    <property type="resolution" value="1.76 A"/>
    <property type="chains" value="A/B=1-231"/>
</dbReference>
<dbReference type="PDB" id="4BMY">
    <property type="method" value="X-ray"/>
    <property type="resolution" value="1.65 A"/>
    <property type="chains" value="A/B=1-231"/>
</dbReference>
<dbReference type="PDB" id="4BMZ">
    <property type="method" value="X-ray"/>
    <property type="resolution" value="1.79 A"/>
    <property type="chains" value="A/B=1-231"/>
</dbReference>
<dbReference type="PDB" id="4BN0">
    <property type="method" value="X-ray"/>
    <property type="resolution" value="2.11 A"/>
    <property type="chains" value="A/B/C/D=1-231"/>
</dbReference>
<dbReference type="PDBsum" id="4BMX"/>
<dbReference type="PDBsum" id="4BMY"/>
<dbReference type="PDBsum" id="4BMZ"/>
<dbReference type="PDBsum" id="4BN0"/>
<dbReference type="SMR" id="O24915"/>
<dbReference type="FunCoup" id="O24915">
    <property type="interactions" value="153"/>
</dbReference>
<dbReference type="IntAct" id="O24915">
    <property type="interactions" value="2"/>
</dbReference>
<dbReference type="STRING" id="85962.HP_0089"/>
<dbReference type="BindingDB" id="O24915"/>
<dbReference type="PaxDb" id="85962-C694_00435"/>
<dbReference type="EnsemblBacteria" id="AAD07157">
    <property type="protein sequence ID" value="AAD07157"/>
    <property type="gene ID" value="HP_0089"/>
</dbReference>
<dbReference type="KEGG" id="heo:C694_00435"/>
<dbReference type="KEGG" id="hpy:HP_0089"/>
<dbReference type="PATRIC" id="fig|85962.47.peg.95"/>
<dbReference type="eggNOG" id="COG0775">
    <property type="taxonomic scope" value="Bacteria"/>
</dbReference>
<dbReference type="InParanoid" id="O24915"/>
<dbReference type="OrthoDB" id="9792278at2"/>
<dbReference type="PhylomeDB" id="O24915"/>
<dbReference type="BioCyc" id="MetaCyc:HP0089-MONOMER"/>
<dbReference type="BRENDA" id="3.2.2.16">
    <property type="organism ID" value="2604"/>
</dbReference>
<dbReference type="BRENDA" id="3.2.2.30">
    <property type="organism ID" value="2604"/>
</dbReference>
<dbReference type="UniPathway" id="UPA00079"/>
<dbReference type="UniPathway" id="UPA00904">
    <property type="reaction ID" value="UER00871"/>
</dbReference>
<dbReference type="EvolutionaryTrace" id="O24915"/>
<dbReference type="Proteomes" id="UP000000429">
    <property type="component" value="Chromosome"/>
</dbReference>
<dbReference type="GO" id="GO:0005829">
    <property type="term" value="C:cytosol"/>
    <property type="evidence" value="ECO:0000318"/>
    <property type="project" value="GO_Central"/>
</dbReference>
<dbReference type="GO" id="GO:0102246">
    <property type="term" value="F:6-amino-6-deoxyfutalosine hydrolase activity"/>
    <property type="evidence" value="ECO:0007669"/>
    <property type="project" value="UniProtKB-EC"/>
</dbReference>
<dbReference type="GO" id="GO:0008782">
    <property type="term" value="F:adenosylhomocysteine nucleosidase activity"/>
    <property type="evidence" value="ECO:0000318"/>
    <property type="project" value="GO_Central"/>
</dbReference>
<dbReference type="GO" id="GO:0008930">
    <property type="term" value="F:methylthioadenosine nucleosidase activity"/>
    <property type="evidence" value="ECO:0000318"/>
    <property type="project" value="GO_Central"/>
</dbReference>
<dbReference type="GO" id="GO:0019509">
    <property type="term" value="P:L-methionine salvage from methylthioadenosine"/>
    <property type="evidence" value="ECO:0007669"/>
    <property type="project" value="UniProtKB-UniPathway"/>
</dbReference>
<dbReference type="GO" id="GO:0019284">
    <property type="term" value="P:L-methionine salvage from S-adenosylmethionine"/>
    <property type="evidence" value="ECO:0000318"/>
    <property type="project" value="GO_Central"/>
</dbReference>
<dbReference type="GO" id="GO:0009234">
    <property type="term" value="P:menaquinone biosynthetic process"/>
    <property type="evidence" value="ECO:0007669"/>
    <property type="project" value="UniProtKB-UniPathway"/>
</dbReference>
<dbReference type="GO" id="GO:0009164">
    <property type="term" value="P:nucleoside catabolic process"/>
    <property type="evidence" value="ECO:0007669"/>
    <property type="project" value="InterPro"/>
</dbReference>
<dbReference type="CDD" id="cd09008">
    <property type="entry name" value="MTAN"/>
    <property type="match status" value="1"/>
</dbReference>
<dbReference type="FunFam" id="3.40.50.1580:FF:000026">
    <property type="entry name" value="Aminodeoxyfutalosine nucleosidase"/>
    <property type="match status" value="1"/>
</dbReference>
<dbReference type="Gene3D" id="3.40.50.1580">
    <property type="entry name" value="Nucleoside phosphorylase domain"/>
    <property type="match status" value="1"/>
</dbReference>
<dbReference type="InterPro" id="IPR010049">
    <property type="entry name" value="MTA_SAH_Nsdase"/>
</dbReference>
<dbReference type="InterPro" id="IPR000845">
    <property type="entry name" value="Nucleoside_phosphorylase_d"/>
</dbReference>
<dbReference type="InterPro" id="IPR035994">
    <property type="entry name" value="Nucleoside_phosphorylase_sf"/>
</dbReference>
<dbReference type="NCBIfam" id="TIGR01704">
    <property type="entry name" value="MTA_SAH-Nsdase"/>
    <property type="match status" value="1"/>
</dbReference>
<dbReference type="NCBIfam" id="NF004079">
    <property type="entry name" value="PRK05584.1"/>
    <property type="match status" value="1"/>
</dbReference>
<dbReference type="PANTHER" id="PTHR46832">
    <property type="entry name" value="5'-METHYLTHIOADENOSINE/S-ADENOSYLHOMOCYSTEINE NUCLEOSIDASE"/>
    <property type="match status" value="1"/>
</dbReference>
<dbReference type="PANTHER" id="PTHR46832:SF1">
    <property type="entry name" value="5'-METHYLTHIOADENOSINE_S-ADENOSYLHOMOCYSTEINE NUCLEOSIDASE"/>
    <property type="match status" value="1"/>
</dbReference>
<dbReference type="Pfam" id="PF01048">
    <property type="entry name" value="PNP_UDP_1"/>
    <property type="match status" value="1"/>
</dbReference>
<dbReference type="SUPFAM" id="SSF53167">
    <property type="entry name" value="Purine and uridine phosphorylases"/>
    <property type="match status" value="1"/>
</dbReference>
<accession>O24915</accession>
<accession>O32636</accession>
<name>MQMTN_HELPY</name>
<sequence length="231" mass="25209">MVQKIGILGAMREEITPILELFGVDFEEIPLGGNVFHKGVYHNKEIIVAYSKIGKVHSTLTTTSMILAFGVQKVLFSGVAGSLVKDLKINDLLVAIQLVQHDVDLSAFDHPLGFIPESAIFIETSESLNALAKEVANEQHIVLKEGVIASGDQFVHSKERKEFLVSEFKASAVEMEGASVAFVCQKFGVPCCVLRSISDNADEEANMSFDAFLEKSAQTSAKFLKSMVDEL</sequence>
<protein>
    <recommendedName>
        <fullName>Aminodeoxyfutalosine nucleosidase</fullName>
        <shortName>AFL nucleosidase</shortName>
        <shortName>Aminofutalosine nucleosidase</shortName>
        <ecNumber evidence="2 3">3.2.2.30</ecNumber>
    </recommendedName>
    <alternativeName>
        <fullName>5'-methylthioadenosine/S-adenosylhomocysteine nucleosidase</fullName>
        <shortName>MTA/SAH nucleosidase</shortName>
        <shortName>MTAN</shortName>
        <ecNumber evidence="2 3">3.2.2.9</ecNumber>
    </alternativeName>
    <alternativeName>
        <fullName>6-amino-6-deoxyfutalosine N-ribosylhydrolase</fullName>
    </alternativeName>
</protein>
<feature type="chain" id="PRO_0000164443" description="Aminodeoxyfutalosine nucleosidase">
    <location>
        <begin position="1"/>
        <end position="231"/>
    </location>
</feature>
<feature type="active site" description="Proton acceptor" evidence="1">
    <location>
        <position position="14"/>
    </location>
</feature>
<feature type="active site" description="Proton donor" evidence="4">
    <location>
        <position position="199"/>
    </location>
</feature>
<feature type="binding site">
    <location>
        <position position="81"/>
    </location>
    <ligand>
        <name>substrate</name>
    </ligand>
</feature>
<feature type="binding site">
    <location>
        <position position="155"/>
    </location>
    <ligand>
        <name>substrate</name>
    </ligand>
</feature>
<feature type="binding site">
    <location>
        <begin position="175"/>
        <end position="176"/>
    </location>
    <ligand>
        <name>substrate</name>
    </ligand>
</feature>
<feature type="sequence conflict" description="In Ref. 2; AAC64855." evidence="4" ref="2">
    <original>D</original>
    <variation>G</variation>
    <location>
        <position position="25"/>
    </location>
</feature>
<feature type="sequence conflict" description="In Ref. 2; AAC64855." evidence="4" ref="2">
    <original>D</original>
    <variation>N</variation>
    <location>
        <position position="109"/>
    </location>
</feature>
<feature type="sequence conflict" description="In Ref. 2; AAC64855." evidence="4" ref="2">
    <original>E</original>
    <variation>K</variation>
    <location>
        <position position="134"/>
    </location>
</feature>
<feature type="sequence conflict" description="In Ref. 2; AAC64855." evidence="4" ref="2">
    <original>V</original>
    <variation>A</variation>
    <location>
        <position position="142"/>
    </location>
</feature>
<feature type="sequence conflict" description="In Ref. 2; AAC64855." evidence="4" ref="2">
    <original>V</original>
    <variation>L</variation>
    <location>
        <position position="147"/>
    </location>
</feature>
<feature type="sequence conflict" description="In Ref. 2; AAC64855." evidence="4" ref="2">
    <original>E</original>
    <variation>R</variation>
    <location>
        <position position="230"/>
    </location>
</feature>
<feature type="strand" evidence="5">
    <location>
        <begin position="3"/>
        <end position="11"/>
    </location>
</feature>
<feature type="helix" evidence="5">
    <location>
        <begin position="12"/>
        <end position="22"/>
    </location>
</feature>
<feature type="strand" evidence="5">
    <location>
        <begin position="27"/>
        <end position="31"/>
    </location>
</feature>
<feature type="strand" evidence="5">
    <location>
        <begin position="34"/>
        <end position="41"/>
    </location>
</feature>
<feature type="strand" evidence="5">
    <location>
        <begin position="44"/>
        <end position="50"/>
    </location>
</feature>
<feature type="helix" evidence="5">
    <location>
        <begin position="55"/>
        <end position="69"/>
    </location>
</feature>
<feature type="strand" evidence="5">
    <location>
        <begin position="72"/>
        <end position="82"/>
    </location>
</feature>
<feature type="strand" evidence="5">
    <location>
        <begin position="92"/>
        <end position="100"/>
    </location>
</feature>
<feature type="helix" evidence="5">
    <location>
        <begin position="106"/>
        <end position="108"/>
    </location>
</feature>
<feature type="strand" evidence="5">
    <location>
        <begin position="120"/>
        <end position="123"/>
    </location>
</feature>
<feature type="helix" evidence="5">
    <location>
        <begin position="126"/>
        <end position="139"/>
    </location>
</feature>
<feature type="strand" evidence="5">
    <location>
        <begin position="143"/>
        <end position="150"/>
    </location>
</feature>
<feature type="helix" evidence="5">
    <location>
        <begin position="158"/>
        <end position="168"/>
    </location>
</feature>
<feature type="strand" evidence="5">
    <location>
        <begin position="171"/>
        <end position="176"/>
    </location>
</feature>
<feature type="helix" evidence="5">
    <location>
        <begin position="177"/>
        <end position="187"/>
    </location>
</feature>
<feature type="strand" evidence="5">
    <location>
        <begin position="191"/>
        <end position="199"/>
    </location>
</feature>
<feature type="helix" evidence="5">
    <location>
        <begin position="211"/>
        <end position="228"/>
    </location>
</feature>
<proteinExistence type="evidence at protein level"/>